<organism>
    <name type="scientific">Bacillus subtilis (strain 168)</name>
    <dbReference type="NCBI Taxonomy" id="224308"/>
    <lineage>
        <taxon>Bacteria</taxon>
        <taxon>Bacillati</taxon>
        <taxon>Bacillota</taxon>
        <taxon>Bacilli</taxon>
        <taxon>Bacillales</taxon>
        <taxon>Bacillaceae</taxon>
        <taxon>Bacillus</taxon>
    </lineage>
</organism>
<feature type="signal peptide" evidence="1">
    <location>
        <begin position="1"/>
        <end position="20"/>
    </location>
</feature>
<feature type="chain" id="PRO_0000018062" description="Probable spore germination lipoprotein YhcN">
    <location>
        <begin position="21"/>
        <end position="189"/>
    </location>
</feature>
<feature type="region of interest" description="Disordered" evidence="2">
    <location>
        <begin position="24"/>
        <end position="79"/>
    </location>
</feature>
<feature type="compositionally biased region" description="Low complexity" evidence="2">
    <location>
        <begin position="51"/>
        <end position="70"/>
    </location>
</feature>
<feature type="lipid moiety-binding region" description="N-palmitoyl cysteine" evidence="1">
    <location>
        <position position="21"/>
    </location>
</feature>
<feature type="lipid moiety-binding region" description="S-diacylglycerol cysteine" evidence="1">
    <location>
        <position position="21"/>
    </location>
</feature>
<feature type="sequence conflict" description="In Ref. 1; CAA65698." evidence="6" ref="1">
    <original>V</original>
    <variation>A</variation>
    <location>
        <position position="66"/>
    </location>
</feature>
<feature type="helix" evidence="7">
    <location>
        <begin position="85"/>
        <end position="91"/>
    </location>
</feature>
<feature type="strand" evidence="7">
    <location>
        <begin position="97"/>
        <end position="105"/>
    </location>
</feature>
<feature type="strand" evidence="7">
    <location>
        <begin position="108"/>
        <end position="115"/>
    </location>
</feature>
<feature type="helix" evidence="7">
    <location>
        <begin position="125"/>
        <end position="136"/>
    </location>
</feature>
<feature type="strand" evidence="7">
    <location>
        <begin position="144"/>
        <end position="148"/>
    </location>
</feature>
<feature type="helix" evidence="7">
    <location>
        <begin position="151"/>
        <end position="166"/>
    </location>
</feature>
<feature type="helix" evidence="7">
    <location>
        <begin position="170"/>
        <end position="172"/>
    </location>
</feature>
<feature type="helix" evidence="7">
    <location>
        <begin position="174"/>
        <end position="184"/>
    </location>
</feature>
<proteinExistence type="evidence at protein level"/>
<reference key="1">
    <citation type="journal article" date="1996" name="Microbiology">
        <title>A 22 kb DNA sequence in the cspB-glpPFKD region at 75 degrees on the Bacillus subtilis chromosome.</title>
        <authorList>
            <person name="Noback M.A."/>
            <person name="Terpstra P."/>
            <person name="Holsappel S."/>
            <person name="Venema G."/>
            <person name="Bron S."/>
        </authorList>
    </citation>
    <scope>NUCLEOTIDE SEQUENCE [GENOMIC DNA]</scope>
    <source>
        <strain>168</strain>
    </source>
</reference>
<reference key="2">
    <citation type="journal article" date="1997" name="Nature">
        <title>The complete genome sequence of the Gram-positive bacterium Bacillus subtilis.</title>
        <authorList>
            <person name="Kunst F."/>
            <person name="Ogasawara N."/>
            <person name="Moszer I."/>
            <person name="Albertini A.M."/>
            <person name="Alloni G."/>
            <person name="Azevedo V."/>
            <person name="Bertero M.G."/>
            <person name="Bessieres P."/>
            <person name="Bolotin A."/>
            <person name="Borchert S."/>
            <person name="Borriss R."/>
            <person name="Boursier L."/>
            <person name="Brans A."/>
            <person name="Braun M."/>
            <person name="Brignell S.C."/>
            <person name="Bron S."/>
            <person name="Brouillet S."/>
            <person name="Bruschi C.V."/>
            <person name="Caldwell B."/>
            <person name="Capuano V."/>
            <person name="Carter N.M."/>
            <person name="Choi S.-K."/>
            <person name="Codani J.-J."/>
            <person name="Connerton I.F."/>
            <person name="Cummings N.J."/>
            <person name="Daniel R.A."/>
            <person name="Denizot F."/>
            <person name="Devine K.M."/>
            <person name="Duesterhoeft A."/>
            <person name="Ehrlich S.D."/>
            <person name="Emmerson P.T."/>
            <person name="Entian K.-D."/>
            <person name="Errington J."/>
            <person name="Fabret C."/>
            <person name="Ferrari E."/>
            <person name="Foulger D."/>
            <person name="Fritz C."/>
            <person name="Fujita M."/>
            <person name="Fujita Y."/>
            <person name="Fuma S."/>
            <person name="Galizzi A."/>
            <person name="Galleron N."/>
            <person name="Ghim S.-Y."/>
            <person name="Glaser P."/>
            <person name="Goffeau A."/>
            <person name="Golightly E.J."/>
            <person name="Grandi G."/>
            <person name="Guiseppi G."/>
            <person name="Guy B.J."/>
            <person name="Haga K."/>
            <person name="Haiech J."/>
            <person name="Harwood C.R."/>
            <person name="Henaut A."/>
            <person name="Hilbert H."/>
            <person name="Holsappel S."/>
            <person name="Hosono S."/>
            <person name="Hullo M.-F."/>
            <person name="Itaya M."/>
            <person name="Jones L.-M."/>
            <person name="Joris B."/>
            <person name="Karamata D."/>
            <person name="Kasahara Y."/>
            <person name="Klaerr-Blanchard M."/>
            <person name="Klein C."/>
            <person name="Kobayashi Y."/>
            <person name="Koetter P."/>
            <person name="Koningstein G."/>
            <person name="Krogh S."/>
            <person name="Kumano M."/>
            <person name="Kurita K."/>
            <person name="Lapidus A."/>
            <person name="Lardinois S."/>
            <person name="Lauber J."/>
            <person name="Lazarevic V."/>
            <person name="Lee S.-M."/>
            <person name="Levine A."/>
            <person name="Liu H."/>
            <person name="Masuda S."/>
            <person name="Mauel C."/>
            <person name="Medigue C."/>
            <person name="Medina N."/>
            <person name="Mellado R.P."/>
            <person name="Mizuno M."/>
            <person name="Moestl D."/>
            <person name="Nakai S."/>
            <person name="Noback M."/>
            <person name="Noone D."/>
            <person name="O'Reilly M."/>
            <person name="Ogawa K."/>
            <person name="Ogiwara A."/>
            <person name="Oudega B."/>
            <person name="Park S.-H."/>
            <person name="Parro V."/>
            <person name="Pohl T.M."/>
            <person name="Portetelle D."/>
            <person name="Porwollik S."/>
            <person name="Prescott A.M."/>
            <person name="Presecan E."/>
            <person name="Pujic P."/>
            <person name="Purnelle B."/>
            <person name="Rapoport G."/>
            <person name="Rey M."/>
            <person name="Reynolds S."/>
            <person name="Rieger M."/>
            <person name="Rivolta C."/>
            <person name="Rocha E."/>
            <person name="Roche B."/>
            <person name="Rose M."/>
            <person name="Sadaie Y."/>
            <person name="Sato T."/>
            <person name="Scanlan E."/>
            <person name="Schleich S."/>
            <person name="Schroeter R."/>
            <person name="Scoffone F."/>
            <person name="Sekiguchi J."/>
            <person name="Sekowska A."/>
            <person name="Seror S.J."/>
            <person name="Serror P."/>
            <person name="Shin B.-S."/>
            <person name="Soldo B."/>
            <person name="Sorokin A."/>
            <person name="Tacconi E."/>
            <person name="Takagi T."/>
            <person name="Takahashi H."/>
            <person name="Takemaru K."/>
            <person name="Takeuchi M."/>
            <person name="Tamakoshi A."/>
            <person name="Tanaka T."/>
            <person name="Terpstra P."/>
            <person name="Tognoni A."/>
            <person name="Tosato V."/>
            <person name="Uchiyama S."/>
            <person name="Vandenbol M."/>
            <person name="Vannier F."/>
            <person name="Vassarotti A."/>
            <person name="Viari A."/>
            <person name="Wambutt R."/>
            <person name="Wedler E."/>
            <person name="Wedler H."/>
            <person name="Weitzenegger T."/>
            <person name="Winters P."/>
            <person name="Wipat A."/>
            <person name="Yamamoto H."/>
            <person name="Yamane K."/>
            <person name="Yasumoto K."/>
            <person name="Yata K."/>
            <person name="Yoshida K."/>
            <person name="Yoshikawa H.-F."/>
            <person name="Zumstein E."/>
            <person name="Yoshikawa H."/>
            <person name="Danchin A."/>
        </authorList>
    </citation>
    <scope>NUCLEOTIDE SEQUENCE [LARGE SCALE GENOMIC DNA]</scope>
    <source>
        <strain>168</strain>
    </source>
</reference>
<reference key="3">
    <citation type="journal article" date="2009" name="Microbiology">
        <title>From a consortium sequence to a unified sequence: the Bacillus subtilis 168 reference genome a decade later.</title>
        <authorList>
            <person name="Barbe V."/>
            <person name="Cruveiller S."/>
            <person name="Kunst F."/>
            <person name="Lenoble P."/>
            <person name="Meurice G."/>
            <person name="Sekowska A."/>
            <person name="Vallenet D."/>
            <person name="Wang T."/>
            <person name="Moszer I."/>
            <person name="Medigue C."/>
            <person name="Danchin A."/>
        </authorList>
    </citation>
    <scope>SEQUENCE REVISION TO 66</scope>
</reference>
<reference key="4">
    <citation type="journal article" date="1998" name="Gene">
        <title>Characterization of yhcN, a new forespore-specific gene of Bacillus subtilis.</title>
        <authorList>
            <person name="Bagyan I."/>
            <person name="Noback M."/>
            <person name="Bron S."/>
            <person name="Paidhungat M."/>
            <person name="Setlow P."/>
        </authorList>
    </citation>
    <scope>PROTEIN SEQUENCE OF 141-150</scope>
    <scope>FUNCTION</scope>
    <scope>SUBCELLULAR LOCATION</scope>
    <scope>DEVELOPMENTAL STAGE</scope>
    <scope>INDUCTION</scope>
    <scope>DISRUPTION PHENOTYPE</scope>
    <source>
        <strain>168 / PS832</strain>
        <strain>168 / PY79</strain>
    </source>
</reference>
<reference key="5">
    <citation type="journal article" date="2016" name="J. Proteome Res.">
        <title>Bacillus subtilis spore inner membrane proteome.</title>
        <authorList>
            <person name="Zheng L."/>
            <person name="Abhyankar W."/>
            <person name="Ouwerling N."/>
            <person name="Dekker H.L."/>
            <person name="van Veen H."/>
            <person name="van der Wel N.N."/>
            <person name="Roseboom W."/>
            <person name="de Koning L.J."/>
            <person name="Brul S."/>
            <person name="de Koster C.G."/>
        </authorList>
    </citation>
    <scope>SUBCELLULAR LOCATION</scope>
</reference>
<reference key="6">
    <citation type="journal article" date="2017" name="FEMS Microbiol. Lett.">
        <title>Proteins YlaJ and YhcN contribute to the efficiency of spore germination in Bacillus subtilis.</title>
        <authorList>
            <person name="Johnson C.L."/>
            <person name="Moir A."/>
        </authorList>
    </citation>
    <scope>FUNCTION</scope>
    <scope>DISRUPTION PHENOTYPE</scope>
</reference>
<protein>
    <recommendedName>
        <fullName evidence="6">Probable spore germination lipoprotein YhcN</fullName>
    </recommendedName>
</protein>
<gene>
    <name type="primary">yhcN</name>
    <name type="ordered locus">BSU09150</name>
</gene>
<name>YHCN_BACSU</name>
<accession>P54598</accession>
<comment type="function">
    <text evidence="4 5">Probably contributes, directly or indirectly, to early events in germination (PubMed:28333204). May play a role in spore outgrowth (PubMed:9611260).</text>
</comment>
<comment type="subcellular location">
    <subcellularLocation>
        <location evidence="3 5">Forespore inner membrane</location>
        <topology evidence="1">Lipid-anchor</topology>
    </subcellularLocation>
</comment>
<comment type="developmental stage">
    <text evidence="5">Expressed in the forespore during sporulation.</text>
</comment>
<comment type="induction">
    <text evidence="5">Expression is dependent on sigma G, and to a much lesser extent on sigma F.</text>
</comment>
<comment type="disruption phenotype">
    <text evidence="4 5">Mutant sporulates normally and has the same resistance to heat and UV radiation than wild-type spores. It exhibits no defect in the initiation of spore germination, but the spore outgrowth is slower than that of wild-type spores (PubMed:9611260). Mutant shows a reduced rate of spore germination in L-alanine (PubMed:28333204).</text>
</comment>
<sequence length="189" mass="21016">MFGKKQVLASVLLIPLLMTGCGVADQGEGRRDNNDVRNVNYRNPANDDMRNVNNRDNVDNNVNDNVNNNRVNDDNNNDRKLEVADEAADKVTDLKEVKHADIIVAGNQAYVAVVLTNGNKGAVENNLKKKIAKKVRSTDKNIDNVYVSANPDFVERMQGYGKRIQNGDPIAGLFDEFTQTVQRVFPNAE</sequence>
<dbReference type="EMBL" id="X96983">
    <property type="protein sequence ID" value="CAA65698.1"/>
    <property type="molecule type" value="Genomic_DNA"/>
</dbReference>
<dbReference type="EMBL" id="AL009126">
    <property type="protein sequence ID" value="CAB12743.2"/>
    <property type="molecule type" value="Genomic_DNA"/>
</dbReference>
<dbReference type="PIR" id="B69823">
    <property type="entry name" value="B69823"/>
</dbReference>
<dbReference type="RefSeq" id="NP_388796.2">
    <property type="nucleotide sequence ID" value="NC_000964.3"/>
</dbReference>
<dbReference type="RefSeq" id="WP_003245125.1">
    <property type="nucleotide sequence ID" value="NZ_OZ025638.1"/>
</dbReference>
<dbReference type="PDB" id="7PEG">
    <property type="method" value="X-ray"/>
    <property type="resolution" value="1.77 A"/>
    <property type="chains" value="A/B=24-189"/>
</dbReference>
<dbReference type="PDBsum" id="7PEG"/>
<dbReference type="SMR" id="P54598"/>
<dbReference type="FunCoup" id="P54598">
    <property type="interactions" value="55"/>
</dbReference>
<dbReference type="STRING" id="224308.BSU09150"/>
<dbReference type="PaxDb" id="224308-BSU09150"/>
<dbReference type="EnsemblBacteria" id="CAB12743">
    <property type="protein sequence ID" value="CAB12743"/>
    <property type="gene ID" value="BSU_09150"/>
</dbReference>
<dbReference type="GeneID" id="939739"/>
<dbReference type="KEGG" id="bsu:BSU09150"/>
<dbReference type="PATRIC" id="fig|224308.179.peg.989"/>
<dbReference type="eggNOG" id="ENOG5032V70">
    <property type="taxonomic scope" value="Bacteria"/>
</dbReference>
<dbReference type="InParanoid" id="P54598"/>
<dbReference type="OrthoDB" id="1707228at2"/>
<dbReference type="BioCyc" id="BSUB:BSU09150-MONOMER"/>
<dbReference type="Proteomes" id="UP000001570">
    <property type="component" value="Chromosome"/>
</dbReference>
<dbReference type="GO" id="GO:0016020">
    <property type="term" value="C:membrane"/>
    <property type="evidence" value="ECO:0007669"/>
    <property type="project" value="UniProtKB-KW"/>
</dbReference>
<dbReference type="GO" id="GO:0030435">
    <property type="term" value="P:sporulation resulting in formation of a cellular spore"/>
    <property type="evidence" value="ECO:0007669"/>
    <property type="project" value="InterPro"/>
</dbReference>
<dbReference type="InterPro" id="IPR014247">
    <property type="entry name" value="Spore_lipoprot_YhcN/YlaJ"/>
</dbReference>
<dbReference type="InterPro" id="IPR019076">
    <property type="entry name" value="Spore_lipoprot_YhcN/YlaJ-like"/>
</dbReference>
<dbReference type="NCBIfam" id="TIGR02898">
    <property type="entry name" value="spore_YhcN_YlaJ"/>
    <property type="match status" value="1"/>
</dbReference>
<dbReference type="Pfam" id="PF09580">
    <property type="entry name" value="Spore_YhcN_YlaJ"/>
    <property type="match status" value="1"/>
</dbReference>
<dbReference type="PROSITE" id="PS51257">
    <property type="entry name" value="PROKAR_LIPOPROTEIN"/>
    <property type="match status" value="1"/>
</dbReference>
<keyword id="KW-0002">3D-structure</keyword>
<keyword id="KW-0903">Direct protein sequencing</keyword>
<keyword id="KW-0309">Germination</keyword>
<keyword id="KW-0449">Lipoprotein</keyword>
<keyword id="KW-0472">Membrane</keyword>
<keyword id="KW-0564">Palmitate</keyword>
<keyword id="KW-1185">Reference proteome</keyword>
<keyword id="KW-0732">Signal</keyword>
<evidence type="ECO:0000255" key="1">
    <source>
        <dbReference type="PROSITE-ProRule" id="PRU00303"/>
    </source>
</evidence>
<evidence type="ECO:0000256" key="2">
    <source>
        <dbReference type="SAM" id="MobiDB-lite"/>
    </source>
</evidence>
<evidence type="ECO:0000269" key="3">
    <source>
    </source>
</evidence>
<evidence type="ECO:0000269" key="4">
    <source>
    </source>
</evidence>
<evidence type="ECO:0000269" key="5">
    <source>
    </source>
</evidence>
<evidence type="ECO:0000305" key="6"/>
<evidence type="ECO:0007829" key="7">
    <source>
        <dbReference type="PDB" id="7PEG"/>
    </source>
</evidence>